<protein>
    <recommendedName>
        <fullName>SPbeta prophage-derived uncharacterized protein YotK</fullName>
    </recommendedName>
</protein>
<proteinExistence type="predicted"/>
<keyword id="KW-0175">Coiled coil</keyword>
<keyword id="KW-1185">Reference proteome</keyword>
<evidence type="ECO:0000255" key="1"/>
<accession>O31866</accession>
<organism>
    <name type="scientific">Bacillus subtilis (strain 168)</name>
    <dbReference type="NCBI Taxonomy" id="224308"/>
    <lineage>
        <taxon>Bacteria</taxon>
        <taxon>Bacillati</taxon>
        <taxon>Bacillota</taxon>
        <taxon>Bacilli</taxon>
        <taxon>Bacillales</taxon>
        <taxon>Bacillaceae</taxon>
        <taxon>Bacillus</taxon>
    </lineage>
</organism>
<dbReference type="EMBL" id="AL009126">
    <property type="protein sequence ID" value="CAB13876.1"/>
    <property type="molecule type" value="Genomic_DNA"/>
</dbReference>
<dbReference type="RefSeq" id="NP_389866.1">
    <property type="nucleotide sequence ID" value="NC_000964.3"/>
</dbReference>
<dbReference type="RefSeq" id="WP_010886533.1">
    <property type="nucleotide sequence ID" value="NZ_OZ025638.1"/>
</dbReference>
<dbReference type="SMR" id="O31866"/>
<dbReference type="FunCoup" id="O31866">
    <property type="interactions" value="102"/>
</dbReference>
<dbReference type="STRING" id="224308.BSU19850"/>
<dbReference type="PaxDb" id="224308-BSU19850"/>
<dbReference type="EnsemblBacteria" id="CAB13876">
    <property type="protein sequence ID" value="CAB13876"/>
    <property type="gene ID" value="BSU_19850"/>
</dbReference>
<dbReference type="GeneID" id="939549"/>
<dbReference type="KEGG" id="bsu:BSU19850"/>
<dbReference type="PATRIC" id="fig|224308.43.peg.2107"/>
<dbReference type="InParanoid" id="O31866"/>
<dbReference type="OrthoDB" id="2906704at2"/>
<dbReference type="BioCyc" id="BSUB:BSU19850-MONOMER"/>
<dbReference type="Proteomes" id="UP000001570">
    <property type="component" value="Chromosome"/>
</dbReference>
<feature type="chain" id="PRO_0000360719" description="SPbeta prophage-derived uncharacterized protein YotK">
    <location>
        <begin position="1"/>
        <end position="61"/>
    </location>
</feature>
<feature type="coiled-coil region" evidence="1">
    <location>
        <begin position="7"/>
        <end position="57"/>
    </location>
</feature>
<name>YOTK_BACSU</name>
<gene>
    <name type="primary">yotK</name>
    <name type="ordered locus">BSU19850</name>
</gene>
<sequence>MNEAYHSIQTLLNKMDRQMKTVKEAIEEKDLQRAHRNLINLADNNEELMQEIRWVKKGTIL</sequence>
<reference key="1">
    <citation type="journal article" date="1997" name="Nature">
        <title>The complete genome sequence of the Gram-positive bacterium Bacillus subtilis.</title>
        <authorList>
            <person name="Kunst F."/>
            <person name="Ogasawara N."/>
            <person name="Moszer I."/>
            <person name="Albertini A.M."/>
            <person name="Alloni G."/>
            <person name="Azevedo V."/>
            <person name="Bertero M.G."/>
            <person name="Bessieres P."/>
            <person name="Bolotin A."/>
            <person name="Borchert S."/>
            <person name="Borriss R."/>
            <person name="Boursier L."/>
            <person name="Brans A."/>
            <person name="Braun M."/>
            <person name="Brignell S.C."/>
            <person name="Bron S."/>
            <person name="Brouillet S."/>
            <person name="Bruschi C.V."/>
            <person name="Caldwell B."/>
            <person name="Capuano V."/>
            <person name="Carter N.M."/>
            <person name="Choi S.-K."/>
            <person name="Codani J.-J."/>
            <person name="Connerton I.F."/>
            <person name="Cummings N.J."/>
            <person name="Daniel R.A."/>
            <person name="Denizot F."/>
            <person name="Devine K.M."/>
            <person name="Duesterhoeft A."/>
            <person name="Ehrlich S.D."/>
            <person name="Emmerson P.T."/>
            <person name="Entian K.-D."/>
            <person name="Errington J."/>
            <person name="Fabret C."/>
            <person name="Ferrari E."/>
            <person name="Foulger D."/>
            <person name="Fritz C."/>
            <person name="Fujita M."/>
            <person name="Fujita Y."/>
            <person name="Fuma S."/>
            <person name="Galizzi A."/>
            <person name="Galleron N."/>
            <person name="Ghim S.-Y."/>
            <person name="Glaser P."/>
            <person name="Goffeau A."/>
            <person name="Golightly E.J."/>
            <person name="Grandi G."/>
            <person name="Guiseppi G."/>
            <person name="Guy B.J."/>
            <person name="Haga K."/>
            <person name="Haiech J."/>
            <person name="Harwood C.R."/>
            <person name="Henaut A."/>
            <person name="Hilbert H."/>
            <person name="Holsappel S."/>
            <person name="Hosono S."/>
            <person name="Hullo M.-F."/>
            <person name="Itaya M."/>
            <person name="Jones L.-M."/>
            <person name="Joris B."/>
            <person name="Karamata D."/>
            <person name="Kasahara Y."/>
            <person name="Klaerr-Blanchard M."/>
            <person name="Klein C."/>
            <person name="Kobayashi Y."/>
            <person name="Koetter P."/>
            <person name="Koningstein G."/>
            <person name="Krogh S."/>
            <person name="Kumano M."/>
            <person name="Kurita K."/>
            <person name="Lapidus A."/>
            <person name="Lardinois S."/>
            <person name="Lauber J."/>
            <person name="Lazarevic V."/>
            <person name="Lee S.-M."/>
            <person name="Levine A."/>
            <person name="Liu H."/>
            <person name="Masuda S."/>
            <person name="Mauel C."/>
            <person name="Medigue C."/>
            <person name="Medina N."/>
            <person name="Mellado R.P."/>
            <person name="Mizuno M."/>
            <person name="Moestl D."/>
            <person name="Nakai S."/>
            <person name="Noback M."/>
            <person name="Noone D."/>
            <person name="O'Reilly M."/>
            <person name="Ogawa K."/>
            <person name="Ogiwara A."/>
            <person name="Oudega B."/>
            <person name="Park S.-H."/>
            <person name="Parro V."/>
            <person name="Pohl T.M."/>
            <person name="Portetelle D."/>
            <person name="Porwollik S."/>
            <person name="Prescott A.M."/>
            <person name="Presecan E."/>
            <person name="Pujic P."/>
            <person name="Purnelle B."/>
            <person name="Rapoport G."/>
            <person name="Rey M."/>
            <person name="Reynolds S."/>
            <person name="Rieger M."/>
            <person name="Rivolta C."/>
            <person name="Rocha E."/>
            <person name="Roche B."/>
            <person name="Rose M."/>
            <person name="Sadaie Y."/>
            <person name="Sato T."/>
            <person name="Scanlan E."/>
            <person name="Schleich S."/>
            <person name="Schroeter R."/>
            <person name="Scoffone F."/>
            <person name="Sekiguchi J."/>
            <person name="Sekowska A."/>
            <person name="Seror S.J."/>
            <person name="Serror P."/>
            <person name="Shin B.-S."/>
            <person name="Soldo B."/>
            <person name="Sorokin A."/>
            <person name="Tacconi E."/>
            <person name="Takagi T."/>
            <person name="Takahashi H."/>
            <person name="Takemaru K."/>
            <person name="Takeuchi M."/>
            <person name="Tamakoshi A."/>
            <person name="Tanaka T."/>
            <person name="Terpstra P."/>
            <person name="Tognoni A."/>
            <person name="Tosato V."/>
            <person name="Uchiyama S."/>
            <person name="Vandenbol M."/>
            <person name="Vannier F."/>
            <person name="Vassarotti A."/>
            <person name="Viari A."/>
            <person name="Wambutt R."/>
            <person name="Wedler E."/>
            <person name="Wedler H."/>
            <person name="Weitzenegger T."/>
            <person name="Winters P."/>
            <person name="Wipat A."/>
            <person name="Yamamoto H."/>
            <person name="Yamane K."/>
            <person name="Yasumoto K."/>
            <person name="Yata K."/>
            <person name="Yoshida K."/>
            <person name="Yoshikawa H.-F."/>
            <person name="Zumstein E."/>
            <person name="Yoshikawa H."/>
            <person name="Danchin A."/>
        </authorList>
    </citation>
    <scope>NUCLEOTIDE SEQUENCE [LARGE SCALE GENOMIC DNA]</scope>
    <source>
        <strain>168</strain>
    </source>
</reference>